<keyword id="KW-0997">Cell inner membrane</keyword>
<keyword id="KW-1003">Cell membrane</keyword>
<keyword id="KW-0472">Membrane</keyword>
<keyword id="KW-1185">Reference proteome</keyword>
<keyword id="KW-0808">Transferase</keyword>
<keyword id="KW-0812">Transmembrane</keyword>
<keyword id="KW-1133">Transmembrane helix</keyword>
<sequence>MTSSYLHFPEFDPVIFSIGPVALHWYGMMYLVGFVFAMWLAIRRANRPGSGWTKNEVENLLYAGFLGVFLGGRIGYVLFYNFPLFLENPLYLFRVWDGGMSFHGGLIGVILVMVIFARRTKRSFFQVSDFIAPLIPFGLGAGRLGNFINGELWGRVDPSFPFAMLFPGSRAEDIELLPSNPQWQSIFDTYGVLPRHPSQLYELVLEGIVLFIILNLFIRKSRPMGAVSGLFLIGYGAFRIIVEFFRQPDAQFTGAWVQYISMGQILSIPMIVAGVIMMVWAYRRSPQQHVS</sequence>
<gene>
    <name evidence="1" type="primary">lgt</name>
    <name type="ordered locus">CKO_04195</name>
</gene>
<accession>A8AP43</accession>
<feature type="chain" id="PRO_1000053414" description="Phosphatidylglycerol--prolipoprotein diacylglyceryl transferase">
    <location>
        <begin position="1"/>
        <end position="291"/>
    </location>
</feature>
<feature type="transmembrane region" description="Helical" evidence="1">
    <location>
        <begin position="22"/>
        <end position="42"/>
    </location>
</feature>
<feature type="transmembrane region" description="Helical" evidence="1">
    <location>
        <begin position="60"/>
        <end position="80"/>
    </location>
</feature>
<feature type="transmembrane region" description="Helical" evidence="1">
    <location>
        <begin position="96"/>
        <end position="116"/>
    </location>
</feature>
<feature type="transmembrane region" description="Helical" evidence="1">
    <location>
        <begin position="130"/>
        <end position="150"/>
    </location>
</feature>
<feature type="transmembrane region" description="Helical" evidence="1">
    <location>
        <begin position="198"/>
        <end position="218"/>
    </location>
</feature>
<feature type="transmembrane region" description="Helical" evidence="1">
    <location>
        <begin position="225"/>
        <end position="245"/>
    </location>
</feature>
<feature type="transmembrane region" description="Helical" evidence="1">
    <location>
        <begin position="260"/>
        <end position="280"/>
    </location>
</feature>
<feature type="binding site" evidence="1">
    <location>
        <position position="143"/>
    </location>
    <ligand>
        <name>a 1,2-diacyl-sn-glycero-3-phospho-(1'-sn-glycerol)</name>
        <dbReference type="ChEBI" id="CHEBI:64716"/>
    </ligand>
</feature>
<name>LGT_CITK8</name>
<protein>
    <recommendedName>
        <fullName evidence="1">Phosphatidylglycerol--prolipoprotein diacylglyceryl transferase</fullName>
        <ecNumber evidence="1">2.5.1.145</ecNumber>
    </recommendedName>
</protein>
<dbReference type="EC" id="2.5.1.145" evidence="1"/>
<dbReference type="EMBL" id="CP000822">
    <property type="protein sequence ID" value="ABV15256.1"/>
    <property type="molecule type" value="Genomic_DNA"/>
</dbReference>
<dbReference type="RefSeq" id="WP_012134944.1">
    <property type="nucleotide sequence ID" value="NC_009792.1"/>
</dbReference>
<dbReference type="SMR" id="A8AP43"/>
<dbReference type="STRING" id="290338.CKO_04195"/>
<dbReference type="GeneID" id="45137815"/>
<dbReference type="KEGG" id="cko:CKO_04195"/>
<dbReference type="HOGENOM" id="CLU_013386_1_0_6"/>
<dbReference type="OrthoDB" id="871140at2"/>
<dbReference type="UniPathway" id="UPA00664"/>
<dbReference type="Proteomes" id="UP000008148">
    <property type="component" value="Chromosome"/>
</dbReference>
<dbReference type="GO" id="GO:0005886">
    <property type="term" value="C:plasma membrane"/>
    <property type="evidence" value="ECO:0007669"/>
    <property type="project" value="UniProtKB-SubCell"/>
</dbReference>
<dbReference type="GO" id="GO:0008961">
    <property type="term" value="F:phosphatidylglycerol-prolipoprotein diacylglyceryl transferase activity"/>
    <property type="evidence" value="ECO:0007669"/>
    <property type="project" value="UniProtKB-UniRule"/>
</dbReference>
<dbReference type="GO" id="GO:0042158">
    <property type="term" value="P:lipoprotein biosynthetic process"/>
    <property type="evidence" value="ECO:0007669"/>
    <property type="project" value="UniProtKB-UniRule"/>
</dbReference>
<dbReference type="HAMAP" id="MF_01147">
    <property type="entry name" value="Lgt"/>
    <property type="match status" value="1"/>
</dbReference>
<dbReference type="InterPro" id="IPR001640">
    <property type="entry name" value="Lgt"/>
</dbReference>
<dbReference type="NCBIfam" id="TIGR00544">
    <property type="entry name" value="lgt"/>
    <property type="match status" value="1"/>
</dbReference>
<dbReference type="PANTHER" id="PTHR30589:SF0">
    <property type="entry name" value="PHOSPHATIDYLGLYCEROL--PROLIPOPROTEIN DIACYLGLYCERYL TRANSFERASE"/>
    <property type="match status" value="1"/>
</dbReference>
<dbReference type="PANTHER" id="PTHR30589">
    <property type="entry name" value="PROLIPOPROTEIN DIACYLGLYCERYL TRANSFERASE"/>
    <property type="match status" value="1"/>
</dbReference>
<dbReference type="Pfam" id="PF01790">
    <property type="entry name" value="LGT"/>
    <property type="match status" value="1"/>
</dbReference>
<dbReference type="PROSITE" id="PS01311">
    <property type="entry name" value="LGT"/>
    <property type="match status" value="1"/>
</dbReference>
<comment type="function">
    <text evidence="1">Catalyzes the transfer of the diacylglyceryl group from phosphatidylglycerol to the sulfhydryl group of the N-terminal cysteine of a prolipoprotein, the first step in the formation of mature lipoproteins.</text>
</comment>
<comment type="catalytic activity">
    <reaction evidence="1">
        <text>L-cysteinyl-[prolipoprotein] + a 1,2-diacyl-sn-glycero-3-phospho-(1'-sn-glycerol) = an S-1,2-diacyl-sn-glyceryl-L-cysteinyl-[prolipoprotein] + sn-glycerol 1-phosphate + H(+)</text>
        <dbReference type="Rhea" id="RHEA:56712"/>
        <dbReference type="Rhea" id="RHEA-COMP:14679"/>
        <dbReference type="Rhea" id="RHEA-COMP:14680"/>
        <dbReference type="ChEBI" id="CHEBI:15378"/>
        <dbReference type="ChEBI" id="CHEBI:29950"/>
        <dbReference type="ChEBI" id="CHEBI:57685"/>
        <dbReference type="ChEBI" id="CHEBI:64716"/>
        <dbReference type="ChEBI" id="CHEBI:140658"/>
        <dbReference type="EC" id="2.5.1.145"/>
    </reaction>
</comment>
<comment type="pathway">
    <text evidence="1">Protein modification; lipoprotein biosynthesis (diacylglyceryl transfer).</text>
</comment>
<comment type="subcellular location">
    <subcellularLocation>
        <location evidence="1">Cell inner membrane</location>
        <topology evidence="1">Multi-pass membrane protein</topology>
    </subcellularLocation>
</comment>
<comment type="similarity">
    <text evidence="1">Belongs to the Lgt family.</text>
</comment>
<reference key="1">
    <citation type="submission" date="2007-08" db="EMBL/GenBank/DDBJ databases">
        <authorList>
            <consortium name="The Citrobacter koseri Genome Sequencing Project"/>
            <person name="McClelland M."/>
            <person name="Sanderson E.K."/>
            <person name="Porwollik S."/>
            <person name="Spieth J."/>
            <person name="Clifton W.S."/>
            <person name="Latreille P."/>
            <person name="Courtney L."/>
            <person name="Wang C."/>
            <person name="Pepin K."/>
            <person name="Bhonagiri V."/>
            <person name="Nash W."/>
            <person name="Johnson M."/>
            <person name="Thiruvilangam P."/>
            <person name="Wilson R."/>
        </authorList>
    </citation>
    <scope>NUCLEOTIDE SEQUENCE [LARGE SCALE GENOMIC DNA]</scope>
    <source>
        <strain>ATCC BAA-895 / CDC 4225-83 / SGSC4696</strain>
    </source>
</reference>
<evidence type="ECO:0000255" key="1">
    <source>
        <dbReference type="HAMAP-Rule" id="MF_01147"/>
    </source>
</evidence>
<proteinExistence type="inferred from homology"/>
<organism>
    <name type="scientific">Citrobacter koseri (strain ATCC BAA-895 / CDC 4225-83 / SGSC4696)</name>
    <dbReference type="NCBI Taxonomy" id="290338"/>
    <lineage>
        <taxon>Bacteria</taxon>
        <taxon>Pseudomonadati</taxon>
        <taxon>Pseudomonadota</taxon>
        <taxon>Gammaproteobacteria</taxon>
        <taxon>Enterobacterales</taxon>
        <taxon>Enterobacteriaceae</taxon>
        <taxon>Citrobacter</taxon>
    </lineage>
</organism>